<reference key="1">
    <citation type="journal article" date="2002" name="Proc. Natl. Acad. Sci. U.S.A.">
        <title>The complete genome of hyperthermophile Methanopyrus kandleri AV19 and monophyly of archaeal methanogens.</title>
        <authorList>
            <person name="Slesarev A.I."/>
            <person name="Mezhevaya K.V."/>
            <person name="Makarova K.S."/>
            <person name="Polushin N.N."/>
            <person name="Shcherbinina O.V."/>
            <person name="Shakhova V.V."/>
            <person name="Belova G.I."/>
            <person name="Aravind L."/>
            <person name="Natale D.A."/>
            <person name="Rogozin I.B."/>
            <person name="Tatusov R.L."/>
            <person name="Wolf Y.I."/>
            <person name="Stetter K.O."/>
            <person name="Malykh A.G."/>
            <person name="Koonin E.V."/>
            <person name="Kozyavkin S.A."/>
        </authorList>
    </citation>
    <scope>NUCLEOTIDE SEQUENCE [LARGE SCALE GENOMIC DNA]</scope>
    <source>
        <strain>AV19 / DSM 6324 / JCM 9639 / NBRC 100938</strain>
    </source>
</reference>
<proteinExistence type="inferred from homology"/>
<comment type="function">
    <text evidence="1">Endonuclease that specifically degrades the RNA of RNA-DNA hybrids.</text>
</comment>
<comment type="catalytic activity">
    <reaction evidence="1">
        <text>Endonucleolytic cleavage to 5'-phosphomonoester.</text>
        <dbReference type="EC" id="3.1.26.4"/>
    </reaction>
</comment>
<comment type="cofactor">
    <cofactor evidence="1">
        <name>Mn(2+)</name>
        <dbReference type="ChEBI" id="CHEBI:29035"/>
    </cofactor>
    <cofactor evidence="1">
        <name>Mg(2+)</name>
        <dbReference type="ChEBI" id="CHEBI:18420"/>
    </cofactor>
    <text evidence="1">Manganese or magnesium. Binds 1 divalent metal ion per monomer in the absence of substrate. May bind a second metal ion after substrate binding.</text>
</comment>
<comment type="subcellular location">
    <subcellularLocation>
        <location evidence="1">Cytoplasm</location>
    </subcellularLocation>
</comment>
<comment type="similarity">
    <text evidence="1">Belongs to the RNase HII family.</text>
</comment>
<evidence type="ECO:0000255" key="1">
    <source>
        <dbReference type="HAMAP-Rule" id="MF_00052"/>
    </source>
</evidence>
<evidence type="ECO:0000255" key="2">
    <source>
        <dbReference type="PROSITE-ProRule" id="PRU01319"/>
    </source>
</evidence>
<name>RNH2_METKA</name>
<protein>
    <recommendedName>
        <fullName evidence="1">Ribonuclease HII</fullName>
        <shortName evidence="1">RNase HII</shortName>
        <ecNumber evidence="1">3.1.26.4</ecNumber>
    </recommendedName>
</protein>
<accession>Q8TYV5</accession>
<gene>
    <name evidence="1" type="primary">rnhB</name>
    <name type="ordered locus">MK0186</name>
</gene>
<keyword id="KW-0963">Cytoplasm</keyword>
<keyword id="KW-0255">Endonuclease</keyword>
<keyword id="KW-0378">Hydrolase</keyword>
<keyword id="KW-0464">Manganese</keyword>
<keyword id="KW-0479">Metal-binding</keyword>
<keyword id="KW-0540">Nuclease</keyword>
<keyword id="KW-1185">Reference proteome</keyword>
<feature type="chain" id="PRO_0000236279" description="Ribonuclease HII">
    <location>
        <begin position="1"/>
        <end position="210"/>
    </location>
</feature>
<feature type="domain" description="RNase H type-2" evidence="2">
    <location>
        <begin position="2"/>
        <end position="203"/>
    </location>
</feature>
<feature type="binding site" evidence="1">
    <location>
        <position position="8"/>
    </location>
    <ligand>
        <name>a divalent metal cation</name>
        <dbReference type="ChEBI" id="CHEBI:60240"/>
    </ligand>
</feature>
<feature type="binding site" evidence="1">
    <location>
        <position position="9"/>
    </location>
    <ligand>
        <name>a divalent metal cation</name>
        <dbReference type="ChEBI" id="CHEBI:60240"/>
    </ligand>
</feature>
<feature type="binding site" evidence="1">
    <location>
        <position position="99"/>
    </location>
    <ligand>
        <name>a divalent metal cation</name>
        <dbReference type="ChEBI" id="CHEBI:60240"/>
    </ligand>
</feature>
<organism>
    <name type="scientific">Methanopyrus kandleri (strain AV19 / DSM 6324 / JCM 9639 / NBRC 100938)</name>
    <dbReference type="NCBI Taxonomy" id="190192"/>
    <lineage>
        <taxon>Archaea</taxon>
        <taxon>Methanobacteriati</taxon>
        <taxon>Methanobacteriota</taxon>
        <taxon>Methanomada group</taxon>
        <taxon>Methanopyri</taxon>
        <taxon>Methanopyrales</taxon>
        <taxon>Methanopyraceae</taxon>
        <taxon>Methanopyrus</taxon>
    </lineage>
</organism>
<sequence>MSGVMGIDEAGRGPVFGPMVVAGVLAPKRELGLGARDSKELTRSARRRLIRALMSDERLRVDLRIVWPWEIDEEGVAKAEFEAIRELVRRAMPDEVILDKPGNYSPERLRRELDLPEGINLIAEERADAKYEVVSAASIVAKTYRDWIVRLLELEYGEVGSGYPSDPRTVDRLRRELRRGGELLKYFRRSWETYKRVESEVKQRKLEDFF</sequence>
<dbReference type="EC" id="3.1.26.4" evidence="1"/>
<dbReference type="EMBL" id="AE009439">
    <property type="protein sequence ID" value="AAM01403.1"/>
    <property type="molecule type" value="Genomic_DNA"/>
</dbReference>
<dbReference type="RefSeq" id="WP_011018558.1">
    <property type="nucleotide sequence ID" value="NC_003551.1"/>
</dbReference>
<dbReference type="SMR" id="Q8TYV5"/>
<dbReference type="FunCoup" id="Q8TYV5">
    <property type="interactions" value="114"/>
</dbReference>
<dbReference type="STRING" id="190192.MK0186"/>
<dbReference type="PaxDb" id="190192-MK0186"/>
<dbReference type="EnsemblBacteria" id="AAM01403">
    <property type="protein sequence ID" value="AAM01403"/>
    <property type="gene ID" value="MK0186"/>
</dbReference>
<dbReference type="GeneID" id="1477489"/>
<dbReference type="KEGG" id="mka:MK0186"/>
<dbReference type="PATRIC" id="fig|190192.8.peg.186"/>
<dbReference type="HOGENOM" id="CLU_036532_0_4_2"/>
<dbReference type="InParanoid" id="Q8TYV5"/>
<dbReference type="OrthoDB" id="33866at2157"/>
<dbReference type="Proteomes" id="UP000001826">
    <property type="component" value="Chromosome"/>
</dbReference>
<dbReference type="GO" id="GO:0005737">
    <property type="term" value="C:cytoplasm"/>
    <property type="evidence" value="ECO:0007669"/>
    <property type="project" value="UniProtKB-SubCell"/>
</dbReference>
<dbReference type="GO" id="GO:0032299">
    <property type="term" value="C:ribonuclease H2 complex"/>
    <property type="evidence" value="ECO:0007669"/>
    <property type="project" value="TreeGrafter"/>
</dbReference>
<dbReference type="GO" id="GO:0030145">
    <property type="term" value="F:manganese ion binding"/>
    <property type="evidence" value="ECO:0007669"/>
    <property type="project" value="UniProtKB-UniRule"/>
</dbReference>
<dbReference type="GO" id="GO:0003723">
    <property type="term" value="F:RNA binding"/>
    <property type="evidence" value="ECO:0007669"/>
    <property type="project" value="InterPro"/>
</dbReference>
<dbReference type="GO" id="GO:0004523">
    <property type="term" value="F:RNA-DNA hybrid ribonuclease activity"/>
    <property type="evidence" value="ECO:0007669"/>
    <property type="project" value="UniProtKB-UniRule"/>
</dbReference>
<dbReference type="GO" id="GO:0043137">
    <property type="term" value="P:DNA replication, removal of RNA primer"/>
    <property type="evidence" value="ECO:0007669"/>
    <property type="project" value="TreeGrafter"/>
</dbReference>
<dbReference type="GO" id="GO:0006298">
    <property type="term" value="P:mismatch repair"/>
    <property type="evidence" value="ECO:0007669"/>
    <property type="project" value="TreeGrafter"/>
</dbReference>
<dbReference type="Gene3D" id="3.30.420.10">
    <property type="entry name" value="Ribonuclease H-like superfamily/Ribonuclease H"/>
    <property type="match status" value="1"/>
</dbReference>
<dbReference type="Gene3D" id="1.10.10.460">
    <property type="entry name" value="Ribonuclease hii. Domain 2"/>
    <property type="match status" value="1"/>
</dbReference>
<dbReference type="HAMAP" id="MF_00052_A">
    <property type="entry name" value="RNase_HII_A"/>
    <property type="match status" value="1"/>
</dbReference>
<dbReference type="InterPro" id="IPR004649">
    <property type="entry name" value="RNase_H2_suA"/>
</dbReference>
<dbReference type="InterPro" id="IPR001352">
    <property type="entry name" value="RNase_HII/HIII"/>
</dbReference>
<dbReference type="InterPro" id="IPR024567">
    <property type="entry name" value="RNase_HII/HIII_dom"/>
</dbReference>
<dbReference type="InterPro" id="IPR020787">
    <property type="entry name" value="RNase_HII_arc"/>
</dbReference>
<dbReference type="InterPro" id="IPR023160">
    <property type="entry name" value="RNase_HII_hlx-loop-hlx_cap_dom"/>
</dbReference>
<dbReference type="InterPro" id="IPR012337">
    <property type="entry name" value="RNaseH-like_sf"/>
</dbReference>
<dbReference type="InterPro" id="IPR036397">
    <property type="entry name" value="RNaseH_sf"/>
</dbReference>
<dbReference type="NCBIfam" id="TIGR00729">
    <property type="entry name" value="ribonuclease HII"/>
    <property type="match status" value="1"/>
</dbReference>
<dbReference type="PANTHER" id="PTHR10954:SF23">
    <property type="entry name" value="RIBONUCLEASE"/>
    <property type="match status" value="1"/>
</dbReference>
<dbReference type="PANTHER" id="PTHR10954">
    <property type="entry name" value="RIBONUCLEASE H2 SUBUNIT A"/>
    <property type="match status" value="1"/>
</dbReference>
<dbReference type="Pfam" id="PF01351">
    <property type="entry name" value="RNase_HII"/>
    <property type="match status" value="1"/>
</dbReference>
<dbReference type="SUPFAM" id="SSF53098">
    <property type="entry name" value="Ribonuclease H-like"/>
    <property type="match status" value="1"/>
</dbReference>
<dbReference type="PROSITE" id="PS51975">
    <property type="entry name" value="RNASE_H_2"/>
    <property type="match status" value="1"/>
</dbReference>